<comment type="subcellular location">
    <subcellularLocation>
        <location evidence="2">Membrane</location>
        <topology evidence="2">Multi-pass membrane protein</topology>
    </subcellularLocation>
</comment>
<comment type="similarity">
    <text evidence="2">Belongs to the GDT1 family.</text>
</comment>
<organism>
    <name type="scientific">Arabidopsis thaliana</name>
    <name type="common">Mouse-ear cress</name>
    <dbReference type="NCBI Taxonomy" id="3702"/>
    <lineage>
        <taxon>Eukaryota</taxon>
        <taxon>Viridiplantae</taxon>
        <taxon>Streptophyta</taxon>
        <taxon>Embryophyta</taxon>
        <taxon>Tracheophyta</taxon>
        <taxon>Spermatophyta</taxon>
        <taxon>Magnoliopsida</taxon>
        <taxon>eudicotyledons</taxon>
        <taxon>Gunneridae</taxon>
        <taxon>Pentapetalae</taxon>
        <taxon>rosids</taxon>
        <taxon>malvids</taxon>
        <taxon>Brassicales</taxon>
        <taxon>Brassicaceae</taxon>
        <taxon>Camelineae</taxon>
        <taxon>Arabidopsis</taxon>
    </lineage>
</organism>
<reference key="1">
    <citation type="journal article" date="2000" name="Nature">
        <title>Sequence and analysis of chromosome 1 of the plant Arabidopsis thaliana.</title>
        <authorList>
            <person name="Theologis A."/>
            <person name="Ecker J.R."/>
            <person name="Palm C.J."/>
            <person name="Federspiel N.A."/>
            <person name="Kaul S."/>
            <person name="White O."/>
            <person name="Alonso J."/>
            <person name="Altafi H."/>
            <person name="Araujo R."/>
            <person name="Bowman C.L."/>
            <person name="Brooks S.Y."/>
            <person name="Buehler E."/>
            <person name="Chan A."/>
            <person name="Chao Q."/>
            <person name="Chen H."/>
            <person name="Cheuk R.F."/>
            <person name="Chin C.W."/>
            <person name="Chung M.K."/>
            <person name="Conn L."/>
            <person name="Conway A.B."/>
            <person name="Conway A.R."/>
            <person name="Creasy T.H."/>
            <person name="Dewar K."/>
            <person name="Dunn P."/>
            <person name="Etgu P."/>
            <person name="Feldblyum T.V."/>
            <person name="Feng J.-D."/>
            <person name="Fong B."/>
            <person name="Fujii C.Y."/>
            <person name="Gill J.E."/>
            <person name="Goldsmith A.D."/>
            <person name="Haas B."/>
            <person name="Hansen N.F."/>
            <person name="Hughes B."/>
            <person name="Huizar L."/>
            <person name="Hunter J.L."/>
            <person name="Jenkins J."/>
            <person name="Johnson-Hopson C."/>
            <person name="Khan S."/>
            <person name="Khaykin E."/>
            <person name="Kim C.J."/>
            <person name="Koo H.L."/>
            <person name="Kremenetskaia I."/>
            <person name="Kurtz D.B."/>
            <person name="Kwan A."/>
            <person name="Lam B."/>
            <person name="Langin-Hooper S."/>
            <person name="Lee A."/>
            <person name="Lee J.M."/>
            <person name="Lenz C.A."/>
            <person name="Li J.H."/>
            <person name="Li Y.-P."/>
            <person name="Lin X."/>
            <person name="Liu S.X."/>
            <person name="Liu Z.A."/>
            <person name="Luros J.S."/>
            <person name="Maiti R."/>
            <person name="Marziali A."/>
            <person name="Militscher J."/>
            <person name="Miranda M."/>
            <person name="Nguyen M."/>
            <person name="Nierman W.C."/>
            <person name="Osborne B.I."/>
            <person name="Pai G."/>
            <person name="Peterson J."/>
            <person name="Pham P.K."/>
            <person name="Rizzo M."/>
            <person name="Rooney T."/>
            <person name="Rowley D."/>
            <person name="Sakano H."/>
            <person name="Salzberg S.L."/>
            <person name="Schwartz J.R."/>
            <person name="Shinn P."/>
            <person name="Southwick A.M."/>
            <person name="Sun H."/>
            <person name="Tallon L.J."/>
            <person name="Tambunga G."/>
            <person name="Toriumi M.J."/>
            <person name="Town C.D."/>
            <person name="Utterback T."/>
            <person name="Van Aken S."/>
            <person name="Vaysberg M."/>
            <person name="Vysotskaia V.S."/>
            <person name="Walker M."/>
            <person name="Wu D."/>
            <person name="Yu G."/>
            <person name="Fraser C.M."/>
            <person name="Venter J.C."/>
            <person name="Davis R.W."/>
        </authorList>
    </citation>
    <scope>NUCLEOTIDE SEQUENCE [LARGE SCALE GENOMIC DNA]</scope>
    <source>
        <strain>cv. Columbia</strain>
    </source>
</reference>
<reference key="2">
    <citation type="journal article" date="2017" name="Plant J.">
        <title>Araport11: a complete reannotation of the Arabidopsis thaliana reference genome.</title>
        <authorList>
            <person name="Cheng C.Y."/>
            <person name="Krishnakumar V."/>
            <person name="Chan A.P."/>
            <person name="Thibaud-Nissen F."/>
            <person name="Schobel S."/>
            <person name="Town C.D."/>
        </authorList>
    </citation>
    <scope>GENOME REANNOTATION</scope>
    <source>
        <strain>cv. Columbia</strain>
    </source>
</reference>
<reference key="3">
    <citation type="journal article" date="2002" name="Science">
        <title>Functional annotation of a full-length Arabidopsis cDNA collection.</title>
        <authorList>
            <person name="Seki M."/>
            <person name="Narusaka M."/>
            <person name="Kamiya A."/>
            <person name="Ishida J."/>
            <person name="Satou M."/>
            <person name="Sakurai T."/>
            <person name="Nakajima M."/>
            <person name="Enju A."/>
            <person name="Akiyama K."/>
            <person name="Oono Y."/>
            <person name="Muramatsu M."/>
            <person name="Hayashizaki Y."/>
            <person name="Kawai J."/>
            <person name="Carninci P."/>
            <person name="Itoh M."/>
            <person name="Ishii Y."/>
            <person name="Arakawa T."/>
            <person name="Shibata K."/>
            <person name="Shinagawa A."/>
            <person name="Shinozaki K."/>
        </authorList>
    </citation>
    <scope>NUCLEOTIDE SEQUENCE [LARGE SCALE MRNA]</scope>
    <source>
        <strain>cv. Columbia</strain>
    </source>
</reference>
<reference key="4">
    <citation type="submission" date="2006-03" db="EMBL/GenBank/DDBJ databases">
        <title>Arabidopsis ORF clones.</title>
        <authorList>
            <person name="Shinn P."/>
            <person name="Chen H."/>
            <person name="Kim C.J."/>
            <person name="Ecker J.R."/>
        </authorList>
    </citation>
    <scope>NUCLEOTIDE SEQUENCE [LARGE SCALE MRNA]</scope>
    <source>
        <strain>cv. Columbia</strain>
    </source>
</reference>
<reference key="5">
    <citation type="journal article" date="2012" name="Mol. Cell. Proteomics">
        <title>Comparative large-scale characterisation of plant vs. mammal proteins reveals similar and idiosyncratic N-alpha acetylation features.</title>
        <authorList>
            <person name="Bienvenut W.V."/>
            <person name="Sumpton D."/>
            <person name="Martinez A."/>
            <person name="Lilla S."/>
            <person name="Espagne C."/>
            <person name="Meinnel T."/>
            <person name="Giglione C."/>
        </authorList>
    </citation>
    <scope>ACETYLATION [LARGE SCALE ANALYSIS] AT GLY-2</scope>
    <scope>CLEAVAGE OF INITIATOR METHIONINE [LARGE SCALE ANALYSIS]</scope>
    <scope>IDENTIFICATION BY MASS SPECTROMETRY [LARGE SCALE ANALYSIS]</scope>
</reference>
<name>GDT15_ARATH</name>
<feature type="initiator methionine" description="Removed" evidence="3">
    <location>
        <position position="1"/>
    </location>
</feature>
<feature type="chain" id="PRO_0000398768" description="GDT1-like protein 5">
    <location>
        <begin position="2"/>
        <end position="228"/>
    </location>
</feature>
<feature type="transmembrane region" description="Helical" evidence="1">
    <location>
        <begin position="12"/>
        <end position="32"/>
    </location>
</feature>
<feature type="transmembrane region" description="Helical" evidence="1">
    <location>
        <begin position="39"/>
        <end position="59"/>
    </location>
</feature>
<feature type="transmembrane region" description="Helical" evidence="1">
    <location>
        <begin position="71"/>
        <end position="91"/>
    </location>
</feature>
<feature type="transmembrane region" description="Helical" evidence="1">
    <location>
        <begin position="133"/>
        <end position="153"/>
    </location>
</feature>
<feature type="transmembrane region" description="Helical" evidence="1">
    <location>
        <begin position="173"/>
        <end position="193"/>
    </location>
</feature>
<feature type="transmembrane region" description="Helical" evidence="1">
    <location>
        <begin position="205"/>
        <end position="225"/>
    </location>
</feature>
<feature type="modified residue" description="N-acetylglycine" evidence="3">
    <location>
        <position position="2"/>
    </location>
</feature>
<sequence>MGSLLQGFTKSLAMTFLSEIGDKTFFAAAILAMRYPRRLVLAGCLSALIVMTILSATLGWAAPNLISRKWTHHITTFLFFGFGLWSLWDGFKEGGGSEELAEVEAELDSDLKKTNDQSKNSKIEDEQKKQKRPFLTAFFSPIFLKAFSINFFGEWGDKSQLATIGLAADENPLGVVLGGIVAQTLCTTAAVLGGKSLASQISERIVALSGGMLFIIFGIQSLLTPVDA</sequence>
<evidence type="ECO:0000255" key="1"/>
<evidence type="ECO:0000305" key="2"/>
<evidence type="ECO:0007744" key="3">
    <source>
    </source>
</evidence>
<protein>
    <recommendedName>
        <fullName>GDT1-like protein 5</fullName>
    </recommendedName>
</protein>
<gene>
    <name type="ordered locus">At1g68650</name>
    <name type="ORF">F24J5.11</name>
</gene>
<accession>Q9SX28</accession>
<proteinExistence type="evidence at protein level"/>
<keyword id="KW-0007">Acetylation</keyword>
<keyword id="KW-0472">Membrane</keyword>
<keyword id="KW-1185">Reference proteome</keyword>
<keyword id="KW-0812">Transmembrane</keyword>
<keyword id="KW-1133">Transmembrane helix</keyword>
<dbReference type="EMBL" id="AC008075">
    <property type="protein sequence ID" value="AAD49978.1"/>
    <property type="molecule type" value="Genomic_DNA"/>
</dbReference>
<dbReference type="EMBL" id="CP002684">
    <property type="protein sequence ID" value="AEE34823.1"/>
    <property type="molecule type" value="Genomic_DNA"/>
</dbReference>
<dbReference type="EMBL" id="AK118742">
    <property type="protein sequence ID" value="BAC43336.1"/>
    <property type="molecule type" value="mRNA"/>
</dbReference>
<dbReference type="EMBL" id="BT024926">
    <property type="protein sequence ID" value="ABD94082.1"/>
    <property type="molecule type" value="mRNA"/>
</dbReference>
<dbReference type="PIR" id="A96711">
    <property type="entry name" value="A96711"/>
</dbReference>
<dbReference type="RefSeq" id="NP_177032.1">
    <property type="nucleotide sequence ID" value="NM_105537.5"/>
</dbReference>
<dbReference type="FunCoup" id="Q9SX28">
    <property type="interactions" value="319"/>
</dbReference>
<dbReference type="STRING" id="3702.Q9SX28"/>
<dbReference type="iPTMnet" id="Q9SX28"/>
<dbReference type="PaxDb" id="3702-AT1G68650.1"/>
<dbReference type="ProteomicsDB" id="247122"/>
<dbReference type="EnsemblPlants" id="AT1G68650.1">
    <property type="protein sequence ID" value="AT1G68650.1"/>
    <property type="gene ID" value="AT1G68650"/>
</dbReference>
<dbReference type="GeneID" id="843195"/>
<dbReference type="Gramene" id="AT1G68650.1">
    <property type="protein sequence ID" value="AT1G68650.1"/>
    <property type="gene ID" value="AT1G68650"/>
</dbReference>
<dbReference type="KEGG" id="ath:AT1G68650"/>
<dbReference type="Araport" id="AT1G68650"/>
<dbReference type="TAIR" id="AT1G68650">
    <property type="gene designation" value="PML5"/>
</dbReference>
<dbReference type="eggNOG" id="KOG2881">
    <property type="taxonomic scope" value="Eukaryota"/>
</dbReference>
<dbReference type="HOGENOM" id="CLU_040186_0_2_1"/>
<dbReference type="InParanoid" id="Q9SX28"/>
<dbReference type="OMA" id="FLYTWYT"/>
<dbReference type="OrthoDB" id="442680at2759"/>
<dbReference type="PhylomeDB" id="Q9SX28"/>
<dbReference type="PRO" id="PR:Q9SX28"/>
<dbReference type="Proteomes" id="UP000006548">
    <property type="component" value="Chromosome 1"/>
</dbReference>
<dbReference type="ExpressionAtlas" id="Q9SX28">
    <property type="expression patterns" value="baseline and differential"/>
</dbReference>
<dbReference type="GO" id="GO:0005783">
    <property type="term" value="C:endoplasmic reticulum"/>
    <property type="evidence" value="ECO:0000314"/>
    <property type="project" value="TAIR"/>
</dbReference>
<dbReference type="GO" id="GO:0016020">
    <property type="term" value="C:membrane"/>
    <property type="evidence" value="ECO:0007669"/>
    <property type="project" value="UniProtKB-SubCell"/>
</dbReference>
<dbReference type="GO" id="GO:0046873">
    <property type="term" value="F:metal ion transmembrane transporter activity"/>
    <property type="evidence" value="ECO:0007669"/>
    <property type="project" value="InterPro"/>
</dbReference>
<dbReference type="InterPro" id="IPR001727">
    <property type="entry name" value="GDT1-like"/>
</dbReference>
<dbReference type="PANTHER" id="PTHR12608:SF1">
    <property type="entry name" value="TRANSMEMBRANE PROTEIN 165"/>
    <property type="match status" value="1"/>
</dbReference>
<dbReference type="PANTHER" id="PTHR12608">
    <property type="entry name" value="TRANSMEMBRANE PROTEIN HTP-1 RELATED"/>
    <property type="match status" value="1"/>
</dbReference>
<dbReference type="Pfam" id="PF01169">
    <property type="entry name" value="GDT1"/>
    <property type="match status" value="2"/>
</dbReference>